<gene>
    <name evidence="1" type="primary">argG</name>
    <name type="ordered locus">GDI1857</name>
    <name type="ordered locus">Gdia_0084</name>
</gene>
<keyword id="KW-0028">Amino-acid biosynthesis</keyword>
<keyword id="KW-0055">Arginine biosynthesis</keyword>
<keyword id="KW-0067">ATP-binding</keyword>
<keyword id="KW-0963">Cytoplasm</keyword>
<keyword id="KW-0436">Ligase</keyword>
<keyword id="KW-0547">Nucleotide-binding</keyword>
<keyword id="KW-1185">Reference proteome</keyword>
<organism>
    <name type="scientific">Gluconacetobacter diazotrophicus (strain ATCC 49037 / DSM 5601 / CCUG 37298 / CIP 103539 / LMG 7603 / PAl5)</name>
    <dbReference type="NCBI Taxonomy" id="272568"/>
    <lineage>
        <taxon>Bacteria</taxon>
        <taxon>Pseudomonadati</taxon>
        <taxon>Pseudomonadota</taxon>
        <taxon>Alphaproteobacteria</taxon>
        <taxon>Acetobacterales</taxon>
        <taxon>Acetobacteraceae</taxon>
        <taxon>Gluconacetobacter</taxon>
    </lineage>
</organism>
<proteinExistence type="inferred from homology"/>
<name>ASSY_GLUDA</name>
<comment type="catalytic activity">
    <reaction evidence="1">
        <text>L-citrulline + L-aspartate + ATP = 2-(N(omega)-L-arginino)succinate + AMP + diphosphate + H(+)</text>
        <dbReference type="Rhea" id="RHEA:10932"/>
        <dbReference type="ChEBI" id="CHEBI:15378"/>
        <dbReference type="ChEBI" id="CHEBI:29991"/>
        <dbReference type="ChEBI" id="CHEBI:30616"/>
        <dbReference type="ChEBI" id="CHEBI:33019"/>
        <dbReference type="ChEBI" id="CHEBI:57472"/>
        <dbReference type="ChEBI" id="CHEBI:57743"/>
        <dbReference type="ChEBI" id="CHEBI:456215"/>
        <dbReference type="EC" id="6.3.4.5"/>
    </reaction>
</comment>
<comment type="pathway">
    <text evidence="1">Amino-acid biosynthesis; L-arginine biosynthesis; L-arginine from L-ornithine and carbamoyl phosphate: step 2/3.</text>
</comment>
<comment type="subunit">
    <text evidence="1">Homotetramer.</text>
</comment>
<comment type="subcellular location">
    <subcellularLocation>
        <location evidence="1">Cytoplasm</location>
    </subcellularLocation>
</comment>
<comment type="similarity">
    <text evidence="1">Belongs to the argininosuccinate synthase family. Type 1 subfamily.</text>
</comment>
<accession>A9HIQ4</accession>
<accession>B5ZJA6</accession>
<protein>
    <recommendedName>
        <fullName evidence="1">Argininosuccinate synthase</fullName>
        <ecNumber evidence="1">6.3.4.5</ecNumber>
    </recommendedName>
    <alternativeName>
        <fullName evidence="1">Citrulline--aspartate ligase</fullName>
    </alternativeName>
</protein>
<dbReference type="EC" id="6.3.4.5" evidence="1"/>
<dbReference type="EMBL" id="AM889285">
    <property type="protein sequence ID" value="CAP55800.1"/>
    <property type="molecule type" value="Genomic_DNA"/>
</dbReference>
<dbReference type="EMBL" id="CP001189">
    <property type="protein sequence ID" value="ACI49884.1"/>
    <property type="molecule type" value="Genomic_DNA"/>
</dbReference>
<dbReference type="RefSeq" id="WP_012225419.1">
    <property type="nucleotide sequence ID" value="NC_010125.1"/>
</dbReference>
<dbReference type="SMR" id="A9HIQ4"/>
<dbReference type="STRING" id="272568.GDI1857"/>
<dbReference type="KEGG" id="gdi:GDI1857"/>
<dbReference type="KEGG" id="gdj:Gdia_0084"/>
<dbReference type="eggNOG" id="COG0137">
    <property type="taxonomic scope" value="Bacteria"/>
</dbReference>
<dbReference type="HOGENOM" id="CLU_032784_4_2_5"/>
<dbReference type="OrthoDB" id="9801641at2"/>
<dbReference type="UniPathway" id="UPA00068">
    <property type="reaction ID" value="UER00113"/>
</dbReference>
<dbReference type="Proteomes" id="UP000001176">
    <property type="component" value="Chromosome"/>
</dbReference>
<dbReference type="GO" id="GO:0005737">
    <property type="term" value="C:cytoplasm"/>
    <property type="evidence" value="ECO:0007669"/>
    <property type="project" value="UniProtKB-SubCell"/>
</dbReference>
<dbReference type="GO" id="GO:0004055">
    <property type="term" value="F:argininosuccinate synthase activity"/>
    <property type="evidence" value="ECO:0007669"/>
    <property type="project" value="UniProtKB-UniRule"/>
</dbReference>
<dbReference type="GO" id="GO:0005524">
    <property type="term" value="F:ATP binding"/>
    <property type="evidence" value="ECO:0007669"/>
    <property type="project" value="UniProtKB-UniRule"/>
</dbReference>
<dbReference type="GO" id="GO:0000053">
    <property type="term" value="P:argininosuccinate metabolic process"/>
    <property type="evidence" value="ECO:0007669"/>
    <property type="project" value="TreeGrafter"/>
</dbReference>
<dbReference type="GO" id="GO:0006526">
    <property type="term" value="P:L-arginine biosynthetic process"/>
    <property type="evidence" value="ECO:0007669"/>
    <property type="project" value="UniProtKB-UniRule"/>
</dbReference>
<dbReference type="GO" id="GO:0000050">
    <property type="term" value="P:urea cycle"/>
    <property type="evidence" value="ECO:0007669"/>
    <property type="project" value="TreeGrafter"/>
</dbReference>
<dbReference type="CDD" id="cd01999">
    <property type="entry name" value="ASS"/>
    <property type="match status" value="1"/>
</dbReference>
<dbReference type="FunFam" id="3.40.50.620:FF:000019">
    <property type="entry name" value="Argininosuccinate synthase"/>
    <property type="match status" value="1"/>
</dbReference>
<dbReference type="FunFam" id="3.90.1260.10:FF:000007">
    <property type="entry name" value="Argininosuccinate synthase"/>
    <property type="match status" value="1"/>
</dbReference>
<dbReference type="Gene3D" id="3.90.1260.10">
    <property type="entry name" value="Argininosuccinate synthetase, chain A, domain 2"/>
    <property type="match status" value="1"/>
</dbReference>
<dbReference type="Gene3D" id="3.40.50.620">
    <property type="entry name" value="HUPs"/>
    <property type="match status" value="1"/>
</dbReference>
<dbReference type="Gene3D" id="1.20.5.470">
    <property type="entry name" value="Single helix bin"/>
    <property type="match status" value="1"/>
</dbReference>
<dbReference type="HAMAP" id="MF_00005">
    <property type="entry name" value="Arg_succ_synth_type1"/>
    <property type="match status" value="1"/>
</dbReference>
<dbReference type="InterPro" id="IPR048268">
    <property type="entry name" value="Arginosuc_syn_C"/>
</dbReference>
<dbReference type="InterPro" id="IPR048267">
    <property type="entry name" value="Arginosuc_syn_N"/>
</dbReference>
<dbReference type="InterPro" id="IPR001518">
    <property type="entry name" value="Arginosuc_synth"/>
</dbReference>
<dbReference type="InterPro" id="IPR018223">
    <property type="entry name" value="Arginosuc_synth_CS"/>
</dbReference>
<dbReference type="InterPro" id="IPR023434">
    <property type="entry name" value="Arginosuc_synth_type_1_subfam"/>
</dbReference>
<dbReference type="InterPro" id="IPR024074">
    <property type="entry name" value="AS_cat/multimer_dom_body"/>
</dbReference>
<dbReference type="InterPro" id="IPR014729">
    <property type="entry name" value="Rossmann-like_a/b/a_fold"/>
</dbReference>
<dbReference type="NCBIfam" id="TIGR00032">
    <property type="entry name" value="argG"/>
    <property type="match status" value="1"/>
</dbReference>
<dbReference type="NCBIfam" id="NF001770">
    <property type="entry name" value="PRK00509.1"/>
    <property type="match status" value="1"/>
</dbReference>
<dbReference type="PANTHER" id="PTHR11587">
    <property type="entry name" value="ARGININOSUCCINATE SYNTHASE"/>
    <property type="match status" value="1"/>
</dbReference>
<dbReference type="PANTHER" id="PTHR11587:SF2">
    <property type="entry name" value="ARGININOSUCCINATE SYNTHASE"/>
    <property type="match status" value="1"/>
</dbReference>
<dbReference type="Pfam" id="PF20979">
    <property type="entry name" value="Arginosuc_syn_C"/>
    <property type="match status" value="1"/>
</dbReference>
<dbReference type="Pfam" id="PF00764">
    <property type="entry name" value="Arginosuc_synth"/>
    <property type="match status" value="1"/>
</dbReference>
<dbReference type="SUPFAM" id="SSF52402">
    <property type="entry name" value="Adenine nucleotide alpha hydrolases-like"/>
    <property type="match status" value="1"/>
</dbReference>
<dbReference type="SUPFAM" id="SSF69864">
    <property type="entry name" value="Argininosuccinate synthetase, C-terminal domain"/>
    <property type="match status" value="1"/>
</dbReference>
<dbReference type="PROSITE" id="PS00564">
    <property type="entry name" value="ARGININOSUCCIN_SYN_1"/>
    <property type="match status" value="1"/>
</dbReference>
<dbReference type="PROSITE" id="PS00565">
    <property type="entry name" value="ARGININOSUCCIN_SYN_2"/>
    <property type="match status" value="1"/>
</dbReference>
<evidence type="ECO:0000255" key="1">
    <source>
        <dbReference type="HAMAP-Rule" id="MF_00005"/>
    </source>
</evidence>
<feature type="chain" id="PRO_1000073820" description="Argininosuccinate synthase">
    <location>
        <begin position="1"/>
        <end position="409"/>
    </location>
</feature>
<feature type="binding site" evidence="1">
    <location>
        <begin position="12"/>
        <end position="20"/>
    </location>
    <ligand>
        <name>ATP</name>
        <dbReference type="ChEBI" id="CHEBI:30616"/>
    </ligand>
</feature>
<feature type="binding site" evidence="1">
    <location>
        <position position="39"/>
    </location>
    <ligand>
        <name>ATP</name>
        <dbReference type="ChEBI" id="CHEBI:30616"/>
    </ligand>
</feature>
<feature type="binding site" evidence="1">
    <location>
        <position position="90"/>
    </location>
    <ligand>
        <name>L-citrulline</name>
        <dbReference type="ChEBI" id="CHEBI:57743"/>
    </ligand>
</feature>
<feature type="binding site" evidence="1">
    <location>
        <position position="95"/>
    </location>
    <ligand>
        <name>L-citrulline</name>
        <dbReference type="ChEBI" id="CHEBI:57743"/>
    </ligand>
</feature>
<feature type="binding site" evidence="1">
    <location>
        <position position="120"/>
    </location>
    <ligand>
        <name>ATP</name>
        <dbReference type="ChEBI" id="CHEBI:30616"/>
    </ligand>
</feature>
<feature type="binding site" evidence="1">
    <location>
        <position position="122"/>
    </location>
    <ligand>
        <name>L-aspartate</name>
        <dbReference type="ChEBI" id="CHEBI:29991"/>
    </ligand>
</feature>
<feature type="binding site" evidence="1">
    <location>
        <position position="126"/>
    </location>
    <ligand>
        <name>L-aspartate</name>
        <dbReference type="ChEBI" id="CHEBI:29991"/>
    </ligand>
</feature>
<feature type="binding site" evidence="1">
    <location>
        <position position="126"/>
    </location>
    <ligand>
        <name>L-citrulline</name>
        <dbReference type="ChEBI" id="CHEBI:57743"/>
    </ligand>
</feature>
<feature type="binding site" evidence="1">
    <location>
        <position position="127"/>
    </location>
    <ligand>
        <name>L-aspartate</name>
        <dbReference type="ChEBI" id="CHEBI:29991"/>
    </ligand>
</feature>
<feature type="binding site" evidence="1">
    <location>
        <position position="130"/>
    </location>
    <ligand>
        <name>L-citrulline</name>
        <dbReference type="ChEBI" id="CHEBI:57743"/>
    </ligand>
</feature>
<feature type="binding site" evidence="1">
    <location>
        <position position="181"/>
    </location>
    <ligand>
        <name>L-citrulline</name>
        <dbReference type="ChEBI" id="CHEBI:57743"/>
    </ligand>
</feature>
<feature type="binding site" evidence="1">
    <location>
        <position position="190"/>
    </location>
    <ligand>
        <name>L-citrulline</name>
        <dbReference type="ChEBI" id="CHEBI:57743"/>
    </ligand>
</feature>
<feature type="binding site" evidence="1">
    <location>
        <position position="266"/>
    </location>
    <ligand>
        <name>L-citrulline</name>
        <dbReference type="ChEBI" id="CHEBI:57743"/>
    </ligand>
</feature>
<feature type="binding site" evidence="1">
    <location>
        <position position="278"/>
    </location>
    <ligand>
        <name>L-citrulline</name>
        <dbReference type="ChEBI" id="CHEBI:57743"/>
    </ligand>
</feature>
<reference key="1">
    <citation type="journal article" date="2009" name="BMC Genomics">
        <title>Complete genome sequence of the sugarcane nitrogen-fixing endophyte Gluconacetobacter diazotrophicus Pal5.</title>
        <authorList>
            <person name="Bertalan M."/>
            <person name="Albano R."/>
            <person name="de Padua V."/>
            <person name="Rouws L."/>
            <person name="Rojas C."/>
            <person name="Hemerly A."/>
            <person name="Teixeira K."/>
            <person name="Schwab S."/>
            <person name="Araujo J."/>
            <person name="Oliveira A."/>
            <person name="Franca L."/>
            <person name="Magalhaes V."/>
            <person name="Alqueres S."/>
            <person name="Cardoso A."/>
            <person name="Almeida W."/>
            <person name="Loureiro M.M."/>
            <person name="Nogueira E."/>
            <person name="Cidade D."/>
            <person name="Oliveira D."/>
            <person name="Simao T."/>
            <person name="Macedo J."/>
            <person name="Valadao A."/>
            <person name="Dreschsel M."/>
            <person name="Freitas F."/>
            <person name="Vidal M."/>
            <person name="Guedes H."/>
            <person name="Rodrigues E."/>
            <person name="Meneses C."/>
            <person name="Brioso P."/>
            <person name="Pozzer L."/>
            <person name="Figueiredo D."/>
            <person name="Montano H."/>
            <person name="Junior J."/>
            <person name="de Souza Filho G."/>
            <person name="Martin Quintana Flores V."/>
            <person name="Ferreira B."/>
            <person name="Branco A."/>
            <person name="Gonzalez P."/>
            <person name="Guillobel H."/>
            <person name="Lemos M."/>
            <person name="Seibel L."/>
            <person name="Macedo J."/>
            <person name="Alves-Ferreira M."/>
            <person name="Sachetto-Martins G."/>
            <person name="Coelho A."/>
            <person name="Santos E."/>
            <person name="Amaral G."/>
            <person name="Neves A."/>
            <person name="Pacheco A.B."/>
            <person name="Carvalho D."/>
            <person name="Lery L."/>
            <person name="Bisch P."/>
            <person name="Rossle S.C."/>
            <person name="Urmenyi T."/>
            <person name="Rael Pereira A."/>
            <person name="Silva R."/>
            <person name="Rondinelli E."/>
            <person name="von Kruger W."/>
            <person name="Martins O."/>
            <person name="Baldani J.I."/>
            <person name="Ferreira P.C."/>
        </authorList>
    </citation>
    <scope>NUCLEOTIDE SEQUENCE [LARGE SCALE GENOMIC DNA]</scope>
    <source>
        <strain>ATCC 49037 / DSM 5601 / CCUG 37298 / CIP 103539 / LMG 7603 / PAl5</strain>
    </source>
</reference>
<reference key="2">
    <citation type="journal article" date="2010" name="Stand. Genomic Sci.">
        <title>Two genome sequences of the same bacterial strain, Gluconacetobacter diazotrophicus PAl 5, suggest a new standard in genome sequence submission.</title>
        <authorList>
            <person name="Giongo A."/>
            <person name="Tyler H.L."/>
            <person name="Zipperer U.N."/>
            <person name="Triplett E.W."/>
        </authorList>
    </citation>
    <scope>NUCLEOTIDE SEQUENCE [LARGE SCALE GENOMIC DNA]</scope>
    <source>
        <strain>ATCC 49037 / DSM 5601 / CCUG 37298 / CIP 103539 / LMG 7603 / PAl5</strain>
    </source>
</reference>
<sequence>MAVKDVKKVVLAYSGGLDTSVILRWLQTTYGCEVVTFTADLGQGEELEPARKKAEMFGVKEIFVEDLRETFVKDFVFPMFRANTLYEGQYLLGTSIARPLIAQRQIEIAEAVGADAVAHGATGKGNDQVRFELAYYALKPDVTVISPWREWDLTSRTRLLAFAEEHQIPIAKDKRGEAPFSVDANLLHSSSEGKLLEDPAVAPDEIVFQRTISPEAAPDVATEIAIDFVSGDPVALNGVTLSPATLLARLNELGKANGIGRLDLVENRFVGMKSRGIYETPGGTILLAAHRSMETITLDREAGHLKDSLMPRYAELIYNGFWFSPERRMLQALIDESQHSVTGRVRLKLYKGNVICVGRESPHSLYDTRVVTFEDDEGAYNQSDALGFIKLNALRLRLGAQIGRRGGAL</sequence>